<keyword id="KW-1185">Reference proteome</keyword>
<keyword id="KW-0687">Ribonucleoprotein</keyword>
<keyword id="KW-0689">Ribosomal protein</keyword>
<keyword id="KW-0694">RNA-binding</keyword>
<keyword id="KW-0699">rRNA-binding</keyword>
<keyword id="KW-0820">tRNA-binding</keyword>
<comment type="function">
    <text evidence="1">One of the primary rRNA binding proteins, it binds directly to 16S rRNA where it nucleates assembly of the head domain of the 30S subunit. Is located at the subunit interface close to the decoding center, probably blocks exit of the E-site tRNA.</text>
</comment>
<comment type="subunit">
    <text evidence="1">Part of the 30S ribosomal subunit. Contacts proteins S9 and S11.</text>
</comment>
<comment type="similarity">
    <text evidence="1">Belongs to the universal ribosomal protein uS7 family.</text>
</comment>
<sequence length="156" mass="17908">MPRRREVPKREILPDPKFGNVDLSKFMNVIMESGKKAVAERIIYGALETVEKKANRDPLEVFITALNNVKPMVEVKSRRVGGANYQVPVEVRPVRRMALAMRWLKESARKRSEKSMAQRLANELLEASEGRGGAMKKRDEVHRMAEANKAFSHFRF</sequence>
<reference key="1">
    <citation type="journal article" date="2007" name="J. Bacteriol.">
        <title>Whole-genome analysis of the methyl tert-butyl ether-degrading beta-proteobacterium Methylibium petroleiphilum PM1.</title>
        <authorList>
            <person name="Kane S.R."/>
            <person name="Chakicherla A.Y."/>
            <person name="Chain P.S.G."/>
            <person name="Schmidt R."/>
            <person name="Shin M.W."/>
            <person name="Legler T.C."/>
            <person name="Scow K.M."/>
            <person name="Larimer F.W."/>
            <person name="Lucas S.M."/>
            <person name="Richardson P.M."/>
            <person name="Hristova K.R."/>
        </authorList>
    </citation>
    <scope>NUCLEOTIDE SEQUENCE [LARGE SCALE GENOMIC DNA]</scope>
    <source>
        <strain>ATCC BAA-1232 / LMG 22953 / PM1</strain>
    </source>
</reference>
<evidence type="ECO:0000255" key="1">
    <source>
        <dbReference type="HAMAP-Rule" id="MF_00480"/>
    </source>
</evidence>
<evidence type="ECO:0000305" key="2"/>
<name>RS7_METPP</name>
<feature type="chain" id="PRO_1000014230" description="Small ribosomal subunit protein uS7">
    <location>
        <begin position="1"/>
        <end position="156"/>
    </location>
</feature>
<organism>
    <name type="scientific">Methylibium petroleiphilum (strain ATCC BAA-1232 / LMG 22953 / PM1)</name>
    <dbReference type="NCBI Taxonomy" id="420662"/>
    <lineage>
        <taxon>Bacteria</taxon>
        <taxon>Pseudomonadati</taxon>
        <taxon>Pseudomonadota</taxon>
        <taxon>Betaproteobacteria</taxon>
        <taxon>Burkholderiales</taxon>
        <taxon>Sphaerotilaceae</taxon>
        <taxon>Methylibium</taxon>
    </lineage>
</organism>
<gene>
    <name evidence="1" type="primary">rpsG</name>
    <name type="ordered locus">Mpe_A3447</name>
</gene>
<dbReference type="EMBL" id="CP000555">
    <property type="protein sequence ID" value="ABM96400.1"/>
    <property type="molecule type" value="Genomic_DNA"/>
</dbReference>
<dbReference type="RefSeq" id="WP_011831021.1">
    <property type="nucleotide sequence ID" value="NC_008825.1"/>
</dbReference>
<dbReference type="SMR" id="A2SLG1"/>
<dbReference type="STRING" id="420662.Mpe_A3447"/>
<dbReference type="KEGG" id="mpt:Mpe_A3447"/>
<dbReference type="eggNOG" id="COG0049">
    <property type="taxonomic scope" value="Bacteria"/>
</dbReference>
<dbReference type="HOGENOM" id="CLU_072226_1_1_4"/>
<dbReference type="Proteomes" id="UP000000366">
    <property type="component" value="Chromosome"/>
</dbReference>
<dbReference type="GO" id="GO:0015935">
    <property type="term" value="C:small ribosomal subunit"/>
    <property type="evidence" value="ECO:0007669"/>
    <property type="project" value="InterPro"/>
</dbReference>
<dbReference type="GO" id="GO:0019843">
    <property type="term" value="F:rRNA binding"/>
    <property type="evidence" value="ECO:0007669"/>
    <property type="project" value="UniProtKB-UniRule"/>
</dbReference>
<dbReference type="GO" id="GO:0003735">
    <property type="term" value="F:structural constituent of ribosome"/>
    <property type="evidence" value="ECO:0007669"/>
    <property type="project" value="InterPro"/>
</dbReference>
<dbReference type="GO" id="GO:0000049">
    <property type="term" value="F:tRNA binding"/>
    <property type="evidence" value="ECO:0007669"/>
    <property type="project" value="UniProtKB-UniRule"/>
</dbReference>
<dbReference type="GO" id="GO:0006412">
    <property type="term" value="P:translation"/>
    <property type="evidence" value="ECO:0007669"/>
    <property type="project" value="UniProtKB-UniRule"/>
</dbReference>
<dbReference type="CDD" id="cd14869">
    <property type="entry name" value="uS7_Bacteria"/>
    <property type="match status" value="1"/>
</dbReference>
<dbReference type="FunFam" id="1.10.455.10:FF:000001">
    <property type="entry name" value="30S ribosomal protein S7"/>
    <property type="match status" value="1"/>
</dbReference>
<dbReference type="Gene3D" id="1.10.455.10">
    <property type="entry name" value="Ribosomal protein S7 domain"/>
    <property type="match status" value="1"/>
</dbReference>
<dbReference type="HAMAP" id="MF_00480_B">
    <property type="entry name" value="Ribosomal_uS7_B"/>
    <property type="match status" value="1"/>
</dbReference>
<dbReference type="InterPro" id="IPR000235">
    <property type="entry name" value="Ribosomal_uS7"/>
</dbReference>
<dbReference type="InterPro" id="IPR005717">
    <property type="entry name" value="Ribosomal_uS7_bac/org-type"/>
</dbReference>
<dbReference type="InterPro" id="IPR020606">
    <property type="entry name" value="Ribosomal_uS7_CS"/>
</dbReference>
<dbReference type="InterPro" id="IPR023798">
    <property type="entry name" value="Ribosomal_uS7_dom"/>
</dbReference>
<dbReference type="InterPro" id="IPR036823">
    <property type="entry name" value="Ribosomal_uS7_dom_sf"/>
</dbReference>
<dbReference type="NCBIfam" id="TIGR01029">
    <property type="entry name" value="rpsG_bact"/>
    <property type="match status" value="1"/>
</dbReference>
<dbReference type="PANTHER" id="PTHR11205">
    <property type="entry name" value="RIBOSOMAL PROTEIN S7"/>
    <property type="match status" value="1"/>
</dbReference>
<dbReference type="Pfam" id="PF00177">
    <property type="entry name" value="Ribosomal_S7"/>
    <property type="match status" value="1"/>
</dbReference>
<dbReference type="PIRSF" id="PIRSF002122">
    <property type="entry name" value="RPS7p_RPS7a_RPS5e_RPS7o"/>
    <property type="match status" value="1"/>
</dbReference>
<dbReference type="SUPFAM" id="SSF47973">
    <property type="entry name" value="Ribosomal protein S7"/>
    <property type="match status" value="1"/>
</dbReference>
<dbReference type="PROSITE" id="PS00052">
    <property type="entry name" value="RIBOSOMAL_S7"/>
    <property type="match status" value="1"/>
</dbReference>
<protein>
    <recommendedName>
        <fullName evidence="1">Small ribosomal subunit protein uS7</fullName>
    </recommendedName>
    <alternativeName>
        <fullName evidence="2">30S ribosomal protein S7</fullName>
    </alternativeName>
</protein>
<proteinExistence type="inferred from homology"/>
<accession>A2SLG1</accession>